<name>NVFK_ASPN1</name>
<proteinExistence type="evidence at protein level"/>
<comment type="function">
    <text evidence="4">FAD-dependent monooxygenase; part of the gene cluster that mediates the biosynthesis of novofumigatonin, a heavily oxygenated meroterpenoid containing a unique orthoester moiety (PubMed:29968715). The first step of the pathway is the synthesis of 3,5-dimethylorsellinic acid (DMOA) by the polyketide synthase nvfA via condensation of one acetyl-CoA starter unit with 3 malonyl-CoA units and 2 methylations (PubMed:29968715). DMOA is then converted to farnesyl-DMOA by the farnesyltransferase nvfB (PubMed:29968715). Epoxydation by FAD-dependent monooxygenase nvfK, followed by a protonation-initiated cyclization catalyzed by the terpene cyclase nvfL leads to the production of asnavolin H (PubMed:29968715). The short chain dehydrogenase nvfC then as a 3-OH dehydrogenase of asnovolin H to yield chemesin D (PubMed:29968715). There are two branches to synthesize asnovolin A from chemesin D (PubMed:29968715). In one branch, chemesin D undergoes Baeyer-Villiger oxidation by nvfH, methylation by nvfJ, and enoyl reduction by the nvfM D enoylreductase that reduces the double bond between C-5'and C-6', to form respectively asnovolin I, asnovolin K, and asnovolin A (PubMed:29968715). In the other branch, the methylation precedes the Baeyer-Villiger oxidation and the enoyl reduction to yield asnovolin A via the asnovolin J intermediate (PubMed:29968715). Asnovolin A is further converted to fumigatonoid A by the Fe(II)/2-oxoglutarate-dependent dioxygenase nvfI that catalyzes an endoperoxidation reaction (PubMed:29968715). The alpha/beta hydrolase nvfD then acts as an epimerase that converts fumigatonoid A to its C-5' epimer, which then undergoes spontaneous or nvfD-catalyzed lactonization (PubMed:29968715). The following step utilizes the ketoreductase nvfG to produce fumigatonoid B (PubMed:29968715). The dioxygenase nvfE further converts fumigatonoid B into fumigatonoid C (PubMed:29968715). Finally the Fe(II)/2-oxoglutarate-dependent dioxygenase nvfF catalyzes two rounds of oxidation to transform fumigatonoid C into the end product, novofumigatonin A (PubMed:29968715).</text>
</comment>
<comment type="catalytic activity">
    <reaction evidence="4">
        <text>(3R)-3-farnesyl-6-hydroxy-2,3,5-trimethyl-4-oxocyclohexa-1,5-diene-1-carboxylate + 2-oxoglutarate + O2 = (3R)-[(10S)-11-epoxyfarnesyl]-2,3,5-trimethyl-6-oxido-4-oxocyclohexa-1,5-diene-1-carboxylate + succinate + CO2</text>
        <dbReference type="Rhea" id="RHEA:67036"/>
        <dbReference type="ChEBI" id="CHEBI:15379"/>
        <dbReference type="ChEBI" id="CHEBI:16526"/>
        <dbReference type="ChEBI" id="CHEBI:16810"/>
        <dbReference type="ChEBI" id="CHEBI:30031"/>
        <dbReference type="ChEBI" id="CHEBI:131857"/>
        <dbReference type="ChEBI" id="CHEBI:167682"/>
    </reaction>
    <physiologicalReaction direction="left-to-right" evidence="4">
        <dbReference type="Rhea" id="RHEA:67037"/>
    </physiologicalReaction>
</comment>
<comment type="cofactor">
    <cofactor evidence="6">
        <name>FAD</name>
        <dbReference type="ChEBI" id="CHEBI:57692"/>
    </cofactor>
</comment>
<comment type="pathway">
    <text evidence="4">Secondary metabolite biosynthesis; terpenoid biosynthesis.</text>
</comment>
<comment type="subcellular location">
    <subcellularLocation>
        <location evidence="2">Membrane</location>
        <topology evidence="2">Single-pass membrane protein</topology>
    </subcellularLocation>
</comment>
<comment type="disruption phenotype">
    <text evidence="4">Completely abolishes the production of novofumigatonin and asnovolin A, but accumulates farnesyl-DMOA.</text>
</comment>
<comment type="similarity">
    <text evidence="6">Belongs to the paxM FAD-dependent monooxygenase family.</text>
</comment>
<protein>
    <recommendedName>
        <fullName evidence="5">FAD-dependent monooxygenase nvfK</fullName>
        <ecNumber evidence="4">1.14.-.-</ecNumber>
    </recommendedName>
    <alternativeName>
        <fullName evidence="5">Farnesyl-DMOA epoxidase nvfK</fullName>
    </alternativeName>
    <alternativeName>
        <fullName evidence="5">Novofumigatonin biosynthesis cluster protein K</fullName>
    </alternativeName>
</protein>
<accession>A0A2I1BSV1</accession>
<keyword id="KW-0274">FAD</keyword>
<keyword id="KW-0285">Flavoprotein</keyword>
<keyword id="KW-0325">Glycoprotein</keyword>
<keyword id="KW-0472">Membrane</keyword>
<keyword id="KW-0560">Oxidoreductase</keyword>
<keyword id="KW-1185">Reference proteome</keyword>
<keyword id="KW-0732">Signal</keyword>
<keyword id="KW-0812">Transmembrane</keyword>
<keyword id="KW-1133">Transmembrane helix</keyword>
<reference key="1">
    <citation type="journal article" date="2018" name="Proc. Natl. Acad. Sci. U.S.A.">
        <title>Linking secondary metabolites to gene clusters through genome sequencing of six diverse Aspergillus species.</title>
        <authorList>
            <person name="Kjaerboelling I."/>
            <person name="Vesth T.C."/>
            <person name="Frisvad J.C."/>
            <person name="Nybo J.L."/>
            <person name="Theobald S."/>
            <person name="Kuo A."/>
            <person name="Bowyer P."/>
            <person name="Matsuda Y."/>
            <person name="Mondo S."/>
            <person name="Lyhne E.K."/>
            <person name="Kogle M.E."/>
            <person name="Clum A."/>
            <person name="Lipzen A."/>
            <person name="Salamov A."/>
            <person name="Ngan C.Y."/>
            <person name="Daum C."/>
            <person name="Chiniquy J."/>
            <person name="Barry K."/>
            <person name="LaButti K."/>
            <person name="Haridas S."/>
            <person name="Simmons B.A."/>
            <person name="Magnuson J.K."/>
            <person name="Mortensen U.H."/>
            <person name="Larsen T.O."/>
            <person name="Grigoriev I.V."/>
            <person name="Baker S.E."/>
            <person name="Andersen M.R."/>
        </authorList>
    </citation>
    <scope>NUCLEOTIDE SEQUENCE [LARGE SCALE GENOMIC DNA]</scope>
    <source>
        <strain>IBT 16806</strain>
    </source>
</reference>
<reference key="2">
    <citation type="journal article" date="2018" name="Nat. Commun.">
        <title>Novofumigatonin biosynthesis involves a non-heme iron-dependent endoperoxide isomerase for orthoester formation.</title>
        <authorList>
            <person name="Matsuda Y."/>
            <person name="Bai T."/>
            <person name="Phippen C.B.W."/>
            <person name="Noedvig C.S."/>
            <person name="Kjaerboelling I."/>
            <person name="Vesth T.C."/>
            <person name="Andersen M.R."/>
            <person name="Mortensen U.H."/>
            <person name="Gotfredsen C.H."/>
            <person name="Abe I."/>
            <person name="Larsen T.O."/>
        </authorList>
    </citation>
    <scope>FUNCTION</scope>
    <scope>DISRUPTION PHENOTYPE</scope>
    <scope>CATALYTIC ACTIVITY</scope>
    <scope>PATHWAY</scope>
</reference>
<gene>
    <name evidence="5" type="primary">nvfK</name>
    <name type="ORF">P174DRAFT_473479</name>
</gene>
<evidence type="ECO:0000250" key="1">
    <source>
        <dbReference type="UniProtKB" id="B8M9J8"/>
    </source>
</evidence>
<evidence type="ECO:0000255" key="2"/>
<evidence type="ECO:0000255" key="3">
    <source>
        <dbReference type="PROSITE-ProRule" id="PRU00498"/>
    </source>
</evidence>
<evidence type="ECO:0000269" key="4">
    <source>
    </source>
</evidence>
<evidence type="ECO:0000303" key="5">
    <source>
    </source>
</evidence>
<evidence type="ECO:0000305" key="6"/>
<sequence length="470" mass="53140">MEKAKFKVVIVGGSITGLTLAHCLHQANIDHIVLERRHEIAPQEGASIGLWPNGGQILDQLGLYGELEKLTEPLNVMHVVYPDGFSYSNTLFRQIRERFGYPVFFMDRQKLLDVLYKTYPNKSKILVNKLVTELRQSDGAACVMTDDGSTYEGNLIVGADGVHSRLRSEIWRLADINQPGLVTAEEKQSMTVEYSCIFGISSPLPGLASGEHVNAYMNGLTVLTFHGKGGRVYWFVIQKLDRKFTYPNVPRFSLDDAERSCTALAKIRIWRDICIGHLWQAREVASMTALEENIFTTWHYQRAILLGDSIHKMTPNIGQGANSGIEDAALLASLINHLVNIQAIKQPSDLTVNRMLENFEAIRYPRMEKIYRRSKFGVRMHTRDDLFKRILGRYVIPLTKDRLAVMASQLIVDGAVLDFLPQPKRRSGPGWPKPGNCRDGQNGHKRIQYILMSIVLVAPAWVYIFSSLVW</sequence>
<feature type="signal peptide" evidence="2">
    <location>
        <begin position="1"/>
        <end position="23"/>
    </location>
</feature>
<feature type="chain" id="PRO_0000453086" description="FAD-dependent monooxygenase nvfK">
    <location>
        <begin position="24"/>
        <end position="470"/>
    </location>
</feature>
<feature type="transmembrane region" description="Helical" evidence="2">
    <location>
        <begin position="450"/>
        <end position="470"/>
    </location>
</feature>
<feature type="active site" evidence="1">
    <location>
        <position position="216"/>
    </location>
</feature>
<feature type="binding site" evidence="1">
    <location>
        <position position="35"/>
    </location>
    <ligand>
        <name>FAD</name>
        <dbReference type="ChEBI" id="CHEBI:57692"/>
    </ligand>
</feature>
<feature type="binding site" evidence="1">
    <location>
        <position position="49"/>
    </location>
    <ligand>
        <name>FAD</name>
        <dbReference type="ChEBI" id="CHEBI:57692"/>
    </ligand>
</feature>
<feature type="binding site" evidence="1">
    <location>
        <position position="108"/>
    </location>
    <ligand>
        <name>FAD</name>
        <dbReference type="ChEBI" id="CHEBI:57692"/>
    </ligand>
</feature>
<feature type="binding site" evidence="1">
    <location>
        <position position="308"/>
    </location>
    <ligand>
        <name>FAD</name>
        <dbReference type="ChEBI" id="CHEBI:57692"/>
    </ligand>
</feature>
<feature type="binding site" evidence="1">
    <location>
        <position position="321"/>
    </location>
    <ligand>
        <name>FAD</name>
        <dbReference type="ChEBI" id="CHEBI:57692"/>
    </ligand>
</feature>
<feature type="glycosylation site" description="N-linked (GlcNAc...) asparagine" evidence="3">
    <location>
        <position position="121"/>
    </location>
</feature>
<dbReference type="EC" id="1.14.-.-" evidence="4"/>
<dbReference type="EMBL" id="MSZS01000014">
    <property type="protein sequence ID" value="PKX88477.1"/>
    <property type="molecule type" value="Genomic_DNA"/>
</dbReference>
<dbReference type="SMR" id="A0A2I1BSV1"/>
<dbReference type="STRING" id="1392255.A0A2I1BSV1"/>
<dbReference type="GlyCosmos" id="A0A2I1BSV1">
    <property type="glycosylation" value="1 site, No reported glycans"/>
</dbReference>
<dbReference type="VEuPathDB" id="FungiDB:P174DRAFT_473479"/>
<dbReference type="OMA" id="SIGLWPN"/>
<dbReference type="OrthoDB" id="10029326at2759"/>
<dbReference type="UniPathway" id="UPA00213"/>
<dbReference type="Proteomes" id="UP000234474">
    <property type="component" value="Unassembled WGS sequence"/>
</dbReference>
<dbReference type="GO" id="GO:0016020">
    <property type="term" value="C:membrane"/>
    <property type="evidence" value="ECO:0007669"/>
    <property type="project" value="UniProtKB-SubCell"/>
</dbReference>
<dbReference type="GO" id="GO:0071949">
    <property type="term" value="F:FAD binding"/>
    <property type="evidence" value="ECO:0007669"/>
    <property type="project" value="InterPro"/>
</dbReference>
<dbReference type="GO" id="GO:0004497">
    <property type="term" value="F:monooxygenase activity"/>
    <property type="evidence" value="ECO:0000314"/>
    <property type="project" value="UniProt"/>
</dbReference>
<dbReference type="GO" id="GO:0140782">
    <property type="term" value="P:novofumigatonin biosynthetic process"/>
    <property type="evidence" value="ECO:0000314"/>
    <property type="project" value="GO_Central"/>
</dbReference>
<dbReference type="Gene3D" id="3.50.50.60">
    <property type="entry name" value="FAD/NAD(P)-binding domain"/>
    <property type="match status" value="1"/>
</dbReference>
<dbReference type="InterPro" id="IPR002938">
    <property type="entry name" value="FAD-bd"/>
</dbReference>
<dbReference type="InterPro" id="IPR036188">
    <property type="entry name" value="FAD/NAD-bd_sf"/>
</dbReference>
<dbReference type="InterPro" id="IPR050562">
    <property type="entry name" value="FAD_mOase_fung"/>
</dbReference>
<dbReference type="PANTHER" id="PTHR47356:SF2">
    <property type="entry name" value="FAD-BINDING DOMAIN-CONTAINING PROTEIN-RELATED"/>
    <property type="match status" value="1"/>
</dbReference>
<dbReference type="PANTHER" id="PTHR47356">
    <property type="entry name" value="FAD-DEPENDENT MONOOXYGENASE ASQG-RELATED"/>
    <property type="match status" value="1"/>
</dbReference>
<dbReference type="Pfam" id="PF01494">
    <property type="entry name" value="FAD_binding_3"/>
    <property type="match status" value="2"/>
</dbReference>
<dbReference type="PRINTS" id="PR00420">
    <property type="entry name" value="RNGMNOXGNASE"/>
</dbReference>
<dbReference type="SUPFAM" id="SSF51905">
    <property type="entry name" value="FAD/NAD(P)-binding domain"/>
    <property type="match status" value="1"/>
</dbReference>
<organism>
    <name type="scientific">Aspergillus novofumigatus (strain IBT 16806)</name>
    <dbReference type="NCBI Taxonomy" id="1392255"/>
    <lineage>
        <taxon>Eukaryota</taxon>
        <taxon>Fungi</taxon>
        <taxon>Dikarya</taxon>
        <taxon>Ascomycota</taxon>
        <taxon>Pezizomycotina</taxon>
        <taxon>Eurotiomycetes</taxon>
        <taxon>Eurotiomycetidae</taxon>
        <taxon>Eurotiales</taxon>
        <taxon>Aspergillaceae</taxon>
        <taxon>Aspergillus</taxon>
        <taxon>Aspergillus subgen. Fumigati</taxon>
    </lineage>
</organism>